<gene>
    <name type="primary">gpi11</name>
    <name type="ORF">AFUA_2G01070</name>
</gene>
<keyword id="KW-0256">Endoplasmic reticulum</keyword>
<keyword id="KW-0325">Glycoprotein</keyword>
<keyword id="KW-0337">GPI-anchor biosynthesis</keyword>
<keyword id="KW-0472">Membrane</keyword>
<keyword id="KW-1185">Reference proteome</keyword>
<keyword id="KW-0812">Transmembrane</keyword>
<keyword id="KW-1133">Transmembrane helix</keyword>
<comment type="function">
    <text evidence="1">Acts in the GPI biosynthetic pathway between GlcNAc-PI synthesis and GPI transfer to protein.</text>
</comment>
<comment type="pathway">
    <text>Glycolipid biosynthesis; glycosylphosphatidylinositol-anchor biosynthesis.</text>
</comment>
<comment type="subcellular location">
    <subcellularLocation>
        <location evidence="1">Endoplasmic reticulum membrane</location>
        <topology evidence="1">Multi-pass membrane protein</topology>
    </subcellularLocation>
</comment>
<comment type="similarity">
    <text evidence="4">Belongs to the PIGF family.</text>
</comment>
<accession>Q4WIQ0</accession>
<dbReference type="EMBL" id="AAHF01000008">
    <property type="protein sequence ID" value="EAL87205.1"/>
    <property type="molecule type" value="Genomic_DNA"/>
</dbReference>
<dbReference type="RefSeq" id="XP_749243.1">
    <property type="nucleotide sequence ID" value="XM_744150.1"/>
</dbReference>
<dbReference type="STRING" id="330879.Q4WIQ0"/>
<dbReference type="GlyCosmos" id="Q4WIQ0">
    <property type="glycosylation" value="1 site, No reported glycans"/>
</dbReference>
<dbReference type="EnsemblFungi" id="EAL87205">
    <property type="protein sequence ID" value="EAL87205"/>
    <property type="gene ID" value="AFUA_2G01070"/>
</dbReference>
<dbReference type="GeneID" id="3506917"/>
<dbReference type="KEGG" id="afm:AFUA_2G01070"/>
<dbReference type="VEuPathDB" id="FungiDB:Afu2g01070"/>
<dbReference type="eggNOG" id="KOG3144">
    <property type="taxonomic scope" value="Eukaryota"/>
</dbReference>
<dbReference type="HOGENOM" id="CLU_069429_1_0_1"/>
<dbReference type="InParanoid" id="Q4WIQ0"/>
<dbReference type="OMA" id="WQRWPVT"/>
<dbReference type="OrthoDB" id="17366at2759"/>
<dbReference type="UniPathway" id="UPA00196"/>
<dbReference type="Proteomes" id="UP000002530">
    <property type="component" value="Chromosome 2"/>
</dbReference>
<dbReference type="GO" id="GO:0005789">
    <property type="term" value="C:endoplasmic reticulum membrane"/>
    <property type="evidence" value="ECO:0007669"/>
    <property type="project" value="UniProtKB-SubCell"/>
</dbReference>
<dbReference type="GO" id="GO:0051377">
    <property type="term" value="F:mannose-ethanolamine phosphotransferase activity"/>
    <property type="evidence" value="ECO:0000318"/>
    <property type="project" value="GO_Central"/>
</dbReference>
<dbReference type="GO" id="GO:0006506">
    <property type="term" value="P:GPI anchor biosynthetic process"/>
    <property type="evidence" value="ECO:0000318"/>
    <property type="project" value="GO_Central"/>
</dbReference>
<dbReference type="InterPro" id="IPR009580">
    <property type="entry name" value="GPI_biosynthesis_protein_Pig-F"/>
</dbReference>
<dbReference type="Pfam" id="PF06699">
    <property type="entry name" value="PIG-F"/>
    <property type="match status" value="1"/>
</dbReference>
<reference key="1">
    <citation type="journal article" date="2005" name="Nature">
        <title>Genomic sequence of the pathogenic and allergenic filamentous fungus Aspergillus fumigatus.</title>
        <authorList>
            <person name="Nierman W.C."/>
            <person name="Pain A."/>
            <person name="Anderson M.J."/>
            <person name="Wortman J.R."/>
            <person name="Kim H.S."/>
            <person name="Arroyo J."/>
            <person name="Berriman M."/>
            <person name="Abe K."/>
            <person name="Archer D.B."/>
            <person name="Bermejo C."/>
            <person name="Bennett J.W."/>
            <person name="Bowyer P."/>
            <person name="Chen D."/>
            <person name="Collins M."/>
            <person name="Coulsen R."/>
            <person name="Davies R."/>
            <person name="Dyer P.S."/>
            <person name="Farman M.L."/>
            <person name="Fedorova N."/>
            <person name="Fedorova N.D."/>
            <person name="Feldblyum T.V."/>
            <person name="Fischer R."/>
            <person name="Fosker N."/>
            <person name="Fraser A."/>
            <person name="Garcia J.L."/>
            <person name="Garcia M.J."/>
            <person name="Goble A."/>
            <person name="Goldman G.H."/>
            <person name="Gomi K."/>
            <person name="Griffith-Jones S."/>
            <person name="Gwilliam R."/>
            <person name="Haas B.J."/>
            <person name="Haas H."/>
            <person name="Harris D.E."/>
            <person name="Horiuchi H."/>
            <person name="Huang J."/>
            <person name="Humphray S."/>
            <person name="Jimenez J."/>
            <person name="Keller N."/>
            <person name="Khouri H."/>
            <person name="Kitamoto K."/>
            <person name="Kobayashi T."/>
            <person name="Konzack S."/>
            <person name="Kulkarni R."/>
            <person name="Kumagai T."/>
            <person name="Lafton A."/>
            <person name="Latge J.-P."/>
            <person name="Li W."/>
            <person name="Lord A."/>
            <person name="Lu C."/>
            <person name="Majoros W.H."/>
            <person name="May G.S."/>
            <person name="Miller B.L."/>
            <person name="Mohamoud Y."/>
            <person name="Molina M."/>
            <person name="Monod M."/>
            <person name="Mouyna I."/>
            <person name="Mulligan S."/>
            <person name="Murphy L.D."/>
            <person name="O'Neil S."/>
            <person name="Paulsen I."/>
            <person name="Penalva M.A."/>
            <person name="Pertea M."/>
            <person name="Price C."/>
            <person name="Pritchard B.L."/>
            <person name="Quail M.A."/>
            <person name="Rabbinowitsch E."/>
            <person name="Rawlins N."/>
            <person name="Rajandream M.A."/>
            <person name="Reichard U."/>
            <person name="Renauld H."/>
            <person name="Robson G.D."/>
            <person name="Rodriguez de Cordoba S."/>
            <person name="Rodriguez-Pena J.M."/>
            <person name="Ronning C.M."/>
            <person name="Rutter S."/>
            <person name="Salzberg S.L."/>
            <person name="Sanchez M."/>
            <person name="Sanchez-Ferrero J.C."/>
            <person name="Saunders D."/>
            <person name="Seeger K."/>
            <person name="Squares R."/>
            <person name="Squares S."/>
            <person name="Takeuchi M."/>
            <person name="Tekaia F."/>
            <person name="Turner G."/>
            <person name="Vazquez de Aldana C.R."/>
            <person name="Weidman J."/>
            <person name="White O."/>
            <person name="Woodward J.R."/>
            <person name="Yu J.-H."/>
            <person name="Fraser C.M."/>
            <person name="Galagan J.E."/>
            <person name="Asai K."/>
            <person name="Machida M."/>
            <person name="Hall N."/>
            <person name="Barrell B.G."/>
            <person name="Denning D.W."/>
        </authorList>
    </citation>
    <scope>NUCLEOTIDE SEQUENCE [LARGE SCALE GENOMIC DNA]</scope>
    <source>
        <strain>ATCC MYA-4609 / CBS 101355 / FGSC A1100 / Af293</strain>
    </source>
</reference>
<protein>
    <recommendedName>
        <fullName>Glycosylphosphatidylinositol anchor biosynthesis protein 11</fullName>
    </recommendedName>
</protein>
<feature type="chain" id="PRO_0000191762" description="Glycosylphosphatidylinositol anchor biosynthesis protein 11">
    <location>
        <begin position="1"/>
        <end position="297"/>
    </location>
</feature>
<feature type="transmembrane region" description="Helical" evidence="2">
    <location>
        <begin position="44"/>
        <end position="64"/>
    </location>
</feature>
<feature type="transmembrane region" description="Helical" evidence="2">
    <location>
        <begin position="76"/>
        <end position="96"/>
    </location>
</feature>
<feature type="transmembrane region" description="Helical" evidence="2">
    <location>
        <begin position="157"/>
        <end position="177"/>
    </location>
</feature>
<feature type="transmembrane region" description="Helical" evidence="2">
    <location>
        <begin position="187"/>
        <end position="207"/>
    </location>
</feature>
<feature type="transmembrane region" description="Helical" evidence="2">
    <location>
        <begin position="225"/>
        <end position="245"/>
    </location>
</feature>
<feature type="transmembrane region" description="Helical" evidence="2">
    <location>
        <begin position="253"/>
        <end position="273"/>
    </location>
</feature>
<feature type="region of interest" description="Disordered" evidence="3">
    <location>
        <begin position="1"/>
        <end position="26"/>
    </location>
</feature>
<feature type="region of interest" description="Disordered" evidence="3">
    <location>
        <begin position="97"/>
        <end position="140"/>
    </location>
</feature>
<feature type="compositionally biased region" description="Low complexity" evidence="3">
    <location>
        <begin position="1"/>
        <end position="18"/>
    </location>
</feature>
<feature type="compositionally biased region" description="Basic and acidic residues" evidence="3">
    <location>
        <begin position="107"/>
        <end position="126"/>
    </location>
</feature>
<feature type="compositionally biased region" description="Basic residues" evidence="3">
    <location>
        <begin position="127"/>
        <end position="140"/>
    </location>
</feature>
<feature type="glycosylation site" description="N-linked (GlcNAc...) asparagine" evidence="2">
    <location>
        <position position="139"/>
    </location>
</feature>
<proteinExistence type="inferred from homology"/>
<evidence type="ECO:0000250" key="1"/>
<evidence type="ECO:0000255" key="2"/>
<evidence type="ECO:0000256" key="3">
    <source>
        <dbReference type="SAM" id="MobiDB-lite"/>
    </source>
</evidence>
<evidence type="ECO:0000305" key="4"/>
<sequence length="297" mass="31827">MTSASPSPLRAANAASSAPVPPPAMKPSAPPVNILPTQLARTYSFVHPAALLAILATRFQALVADPVAEMLNTLPFLALLQVTYVMVCLPPAGSVLPSPPASPVSDGDEKEKEKEKEKEKEKEKRKLPLRAGKLPRKKNQTHAAGLSAKLTPALLSLILTFLLATPVLSLLLVLFGAPLTTHNAETVLCAAHMALLASTALIYVHGVDGAVWREVWAFARPADAVWGGALGTALGAWFGAVPIPLDWDRPWQAFPITILTGAYFGFAVGSVVCRSSWLFGKWLEFTPEQDDRDKKTE</sequence>
<organism>
    <name type="scientific">Aspergillus fumigatus (strain ATCC MYA-4609 / CBS 101355 / FGSC A1100 / Af293)</name>
    <name type="common">Neosartorya fumigata</name>
    <dbReference type="NCBI Taxonomy" id="330879"/>
    <lineage>
        <taxon>Eukaryota</taxon>
        <taxon>Fungi</taxon>
        <taxon>Dikarya</taxon>
        <taxon>Ascomycota</taxon>
        <taxon>Pezizomycotina</taxon>
        <taxon>Eurotiomycetes</taxon>
        <taxon>Eurotiomycetidae</taxon>
        <taxon>Eurotiales</taxon>
        <taxon>Aspergillaceae</taxon>
        <taxon>Aspergillus</taxon>
        <taxon>Aspergillus subgen. Fumigati</taxon>
    </lineage>
</organism>
<name>GPI11_ASPFU</name>